<organism>
    <name type="scientific">Homo sapiens</name>
    <name type="common">Human</name>
    <dbReference type="NCBI Taxonomy" id="9606"/>
    <lineage>
        <taxon>Eukaryota</taxon>
        <taxon>Metazoa</taxon>
        <taxon>Chordata</taxon>
        <taxon>Craniata</taxon>
        <taxon>Vertebrata</taxon>
        <taxon>Euteleostomi</taxon>
        <taxon>Mammalia</taxon>
        <taxon>Eutheria</taxon>
        <taxon>Euarchontoglires</taxon>
        <taxon>Primates</taxon>
        <taxon>Haplorrhini</taxon>
        <taxon>Catarrhini</taxon>
        <taxon>Hominidae</taxon>
        <taxon>Homo</taxon>
    </lineage>
</organism>
<reference key="1">
    <citation type="journal article" date="2003" name="Genome Res.">
        <title>Analysis of the gene-dense major histocompatibility complex class III region and its comparison to mouse.</title>
        <authorList>
            <person name="Xie T."/>
            <person name="Rowen L."/>
            <person name="Aguado B."/>
            <person name="Ahearn M.E."/>
            <person name="Madan A."/>
            <person name="Qin S."/>
            <person name="Campbell R.D."/>
            <person name="Hood L."/>
        </authorList>
    </citation>
    <scope>NUCLEOTIDE SEQUENCE [LARGE SCALE GENOMIC DNA]</scope>
</reference>
<reference key="2">
    <citation type="submission" date="2004-12" db="EMBL/GenBank/DDBJ databases">
        <title>Homo sapiens 2,229,817bp genomic DNA of 6p21.3 HLA class I region.</title>
        <authorList>
            <person name="Shiina S."/>
            <person name="Tamiya G."/>
            <person name="Oka A."/>
            <person name="Inoko H."/>
        </authorList>
    </citation>
    <scope>NUCLEOTIDE SEQUENCE [LARGE SCALE GENOMIC DNA]</scope>
</reference>
<reference key="3">
    <citation type="journal article" date="2003" name="Nature">
        <title>The DNA sequence and analysis of human chromosome 6.</title>
        <authorList>
            <person name="Mungall A.J."/>
            <person name="Palmer S.A."/>
            <person name="Sims S.K."/>
            <person name="Edwards C.A."/>
            <person name="Ashurst J.L."/>
            <person name="Wilming L."/>
            <person name="Jones M.C."/>
            <person name="Horton R."/>
            <person name="Hunt S.E."/>
            <person name="Scott C.E."/>
            <person name="Gilbert J.G.R."/>
            <person name="Clamp M.E."/>
            <person name="Bethel G."/>
            <person name="Milne S."/>
            <person name="Ainscough R."/>
            <person name="Almeida J.P."/>
            <person name="Ambrose K.D."/>
            <person name="Andrews T.D."/>
            <person name="Ashwell R.I.S."/>
            <person name="Babbage A.K."/>
            <person name="Bagguley C.L."/>
            <person name="Bailey J."/>
            <person name="Banerjee R."/>
            <person name="Barker D.J."/>
            <person name="Barlow K.F."/>
            <person name="Bates K."/>
            <person name="Beare D.M."/>
            <person name="Beasley H."/>
            <person name="Beasley O."/>
            <person name="Bird C.P."/>
            <person name="Blakey S.E."/>
            <person name="Bray-Allen S."/>
            <person name="Brook J."/>
            <person name="Brown A.J."/>
            <person name="Brown J.Y."/>
            <person name="Burford D.C."/>
            <person name="Burrill W."/>
            <person name="Burton J."/>
            <person name="Carder C."/>
            <person name="Carter N.P."/>
            <person name="Chapman J.C."/>
            <person name="Clark S.Y."/>
            <person name="Clark G."/>
            <person name="Clee C.M."/>
            <person name="Clegg S."/>
            <person name="Cobley V."/>
            <person name="Collier R.E."/>
            <person name="Collins J.E."/>
            <person name="Colman L.K."/>
            <person name="Corby N.R."/>
            <person name="Coville G.J."/>
            <person name="Culley K.M."/>
            <person name="Dhami P."/>
            <person name="Davies J."/>
            <person name="Dunn M."/>
            <person name="Earthrowl M.E."/>
            <person name="Ellington A.E."/>
            <person name="Evans K.A."/>
            <person name="Faulkner L."/>
            <person name="Francis M.D."/>
            <person name="Frankish A."/>
            <person name="Frankland J."/>
            <person name="French L."/>
            <person name="Garner P."/>
            <person name="Garnett J."/>
            <person name="Ghori M.J."/>
            <person name="Gilby L.M."/>
            <person name="Gillson C.J."/>
            <person name="Glithero R.J."/>
            <person name="Grafham D.V."/>
            <person name="Grant M."/>
            <person name="Gribble S."/>
            <person name="Griffiths C."/>
            <person name="Griffiths M.N.D."/>
            <person name="Hall R."/>
            <person name="Halls K.S."/>
            <person name="Hammond S."/>
            <person name="Harley J.L."/>
            <person name="Hart E.A."/>
            <person name="Heath P.D."/>
            <person name="Heathcott R."/>
            <person name="Holmes S.J."/>
            <person name="Howden P.J."/>
            <person name="Howe K.L."/>
            <person name="Howell G.R."/>
            <person name="Huckle E."/>
            <person name="Humphray S.J."/>
            <person name="Humphries M.D."/>
            <person name="Hunt A.R."/>
            <person name="Johnson C.M."/>
            <person name="Joy A.A."/>
            <person name="Kay M."/>
            <person name="Keenan S.J."/>
            <person name="Kimberley A.M."/>
            <person name="King A."/>
            <person name="Laird G.K."/>
            <person name="Langford C."/>
            <person name="Lawlor S."/>
            <person name="Leongamornlert D.A."/>
            <person name="Leversha M."/>
            <person name="Lloyd C.R."/>
            <person name="Lloyd D.M."/>
            <person name="Loveland J.E."/>
            <person name="Lovell J."/>
            <person name="Martin S."/>
            <person name="Mashreghi-Mohammadi M."/>
            <person name="Maslen G.L."/>
            <person name="Matthews L."/>
            <person name="McCann O.T."/>
            <person name="McLaren S.J."/>
            <person name="McLay K."/>
            <person name="McMurray A."/>
            <person name="Moore M.J.F."/>
            <person name="Mullikin J.C."/>
            <person name="Niblett D."/>
            <person name="Nickerson T."/>
            <person name="Novik K.L."/>
            <person name="Oliver K."/>
            <person name="Overton-Larty E.K."/>
            <person name="Parker A."/>
            <person name="Patel R."/>
            <person name="Pearce A.V."/>
            <person name="Peck A.I."/>
            <person name="Phillimore B.J.C.T."/>
            <person name="Phillips S."/>
            <person name="Plumb R.W."/>
            <person name="Porter K.M."/>
            <person name="Ramsey Y."/>
            <person name="Ranby S.A."/>
            <person name="Rice C.M."/>
            <person name="Ross M.T."/>
            <person name="Searle S.M."/>
            <person name="Sehra H.K."/>
            <person name="Sheridan E."/>
            <person name="Skuce C.D."/>
            <person name="Smith S."/>
            <person name="Smith M."/>
            <person name="Spraggon L."/>
            <person name="Squares S.L."/>
            <person name="Steward C.A."/>
            <person name="Sycamore N."/>
            <person name="Tamlyn-Hall G."/>
            <person name="Tester J."/>
            <person name="Theaker A.J."/>
            <person name="Thomas D.W."/>
            <person name="Thorpe A."/>
            <person name="Tracey A."/>
            <person name="Tromans A."/>
            <person name="Tubby B."/>
            <person name="Wall M."/>
            <person name="Wallis J.M."/>
            <person name="West A.P."/>
            <person name="White S.S."/>
            <person name="Whitehead S.L."/>
            <person name="Whittaker H."/>
            <person name="Wild A."/>
            <person name="Willey D.J."/>
            <person name="Wilmer T.E."/>
            <person name="Wood J.M."/>
            <person name="Wray P.W."/>
            <person name="Wyatt J.C."/>
            <person name="Young L."/>
            <person name="Younger R.M."/>
            <person name="Bentley D.R."/>
            <person name="Coulson A."/>
            <person name="Durbin R.M."/>
            <person name="Hubbard T."/>
            <person name="Sulston J.E."/>
            <person name="Dunham I."/>
            <person name="Rogers J."/>
            <person name="Beck S."/>
        </authorList>
    </citation>
    <scope>NUCLEOTIDE SEQUENCE [LARGE SCALE GENOMIC DNA]</scope>
</reference>
<reference key="4">
    <citation type="journal article" date="2004" name="Genome Res.">
        <title>The status, quality, and expansion of the NIH full-length cDNA project: the Mammalian Gene Collection (MGC).</title>
        <authorList>
            <consortium name="The MGC Project Team"/>
        </authorList>
    </citation>
    <scope>NUCLEOTIDE SEQUENCE [LARGE SCALE MRNA] (ISOFORM 2)</scope>
</reference>
<accession>Q5SSQ6</accession>
<accession>A2ABF2</accession>
<accession>A2ABS9</accession>
<accession>Q9Y335</accession>
<sequence>MGSQGSGGVPLVQAPYTVLLLPLGTSRQDPGAQSFFLWLRRMQALEREQDALWQGLELLQHGQAWFEDHLREAQRQQLHLGALGENFLTDLHSEPGRPPLAQIQKVNICLQNLIHEKELSRQQKGVTQPKEEMAQRGCTKGPRGPTRV</sequence>
<proteinExistence type="evidence at protein level"/>
<name>SAPC1_HUMAN</name>
<feature type="chain" id="PRO_0000244082" description="Suppressor APC domain-containing protein 1">
    <location>
        <begin position="1"/>
        <end position="148"/>
    </location>
</feature>
<feature type="region of interest" description="Disordered" evidence="1">
    <location>
        <begin position="120"/>
        <end position="148"/>
    </location>
</feature>
<feature type="splice variant" id="VSP_040223" description="In isoform 2." evidence="2">
    <original>K</original>
    <variation>KFSPSPLNKASSCTTQDSKERRREQNLWQQQ</variation>
    <location>
        <position position="117"/>
    </location>
</feature>
<feature type="sequence variant" id="VAR_056889" description="In dbSNP:rs17201151.">
    <original>P</original>
    <variation>S</variation>
    <location>
        <position position="30"/>
    </location>
</feature>
<feature type="sequence variant" id="VAR_056890" description="In dbSNP:rs6905572.">
    <original>P</original>
    <variation>L</variation>
    <location>
        <position position="99"/>
    </location>
</feature>
<comment type="interaction">
    <interactant intactId="EBI-13072754">
        <id>Q5SSQ6-2</id>
    </interactant>
    <interactant intactId="EBI-11524452">
        <id>Q8N9N5-2</id>
        <label>BANP</label>
    </interactant>
    <organismsDiffer>false</organismsDiffer>
    <experiments>3</experiments>
</comment>
<comment type="interaction">
    <interactant intactId="EBI-13072754">
        <id>Q5SSQ6-2</id>
    </interactant>
    <interactant intactId="EBI-743105">
        <id>Q5JVL4</id>
        <label>EFHC1</label>
    </interactant>
    <organismsDiffer>false</organismsDiffer>
    <experiments>3</experiments>
</comment>
<comment type="interaction">
    <interactant intactId="EBI-13072754">
        <id>Q5SSQ6-2</id>
    </interactant>
    <interactant intactId="EBI-740220">
        <id>O14964</id>
        <label>HGS</label>
    </interactant>
    <organismsDiffer>false</organismsDiffer>
    <experiments>3</experiments>
</comment>
<comment type="interaction">
    <interactant intactId="EBI-13072754">
        <id>Q5SSQ6-2</id>
    </interactant>
    <interactant intactId="EBI-7116203">
        <id>O75031</id>
        <label>HSF2BP</label>
    </interactant>
    <organismsDiffer>false</organismsDiffer>
    <experiments>3</experiments>
</comment>
<comment type="interaction">
    <interactant intactId="EBI-13072754">
        <id>Q5SSQ6-2</id>
    </interactant>
    <interactant intactId="EBI-10226430">
        <id>Q0D2K3</id>
        <label>RIPPLY1</label>
    </interactant>
    <organismsDiffer>false</organismsDiffer>
    <experiments>3</experiments>
</comment>
<comment type="interaction">
    <interactant intactId="EBI-13072754">
        <id>Q5SSQ6-2</id>
    </interactant>
    <interactant intactId="EBI-954089">
        <id>O15273</id>
        <label>TCAP</label>
    </interactant>
    <organismsDiffer>false</organismsDiffer>
    <experiments>3</experiments>
</comment>
<comment type="alternative products">
    <event type="alternative splicing"/>
    <isoform>
        <id>Q5SSQ6-1</id>
        <name>1</name>
        <sequence type="displayed"/>
    </isoform>
    <isoform>
        <id>Q5SSQ6-2</id>
        <name>2</name>
        <sequence type="described" ref="VSP_040223"/>
    </isoform>
</comment>
<gene>
    <name type="primary">SAPCD1</name>
    <name type="synonym">C6orf26</name>
    <name type="synonym">G7D</name>
    <name type="synonym">NG23</name>
</gene>
<evidence type="ECO:0000256" key="1">
    <source>
        <dbReference type="SAM" id="MobiDB-lite"/>
    </source>
</evidence>
<evidence type="ECO:0000303" key="2">
    <source>
    </source>
</evidence>
<keyword id="KW-0025">Alternative splicing</keyword>
<keyword id="KW-1185">Reference proteome</keyword>
<dbReference type="EMBL" id="AF134726">
    <property type="protein sequence ID" value="AAD21821.1"/>
    <property type="molecule type" value="Genomic_DNA"/>
</dbReference>
<dbReference type="EMBL" id="BA000025">
    <property type="protein sequence ID" value="BAB63305.1"/>
    <property type="molecule type" value="Genomic_DNA"/>
</dbReference>
<dbReference type="EMBL" id="AL662834">
    <property type="status" value="NOT_ANNOTATED_CDS"/>
    <property type="molecule type" value="Genomic_DNA"/>
</dbReference>
<dbReference type="EMBL" id="AL662899">
    <property type="status" value="NOT_ANNOTATED_CDS"/>
    <property type="molecule type" value="Genomic_DNA"/>
</dbReference>
<dbReference type="EMBL" id="BX248133">
    <property type="status" value="NOT_ANNOTATED_CDS"/>
    <property type="molecule type" value="Genomic_DNA"/>
</dbReference>
<dbReference type="EMBL" id="CR759787">
    <property type="status" value="NOT_ANNOTATED_CDS"/>
    <property type="molecule type" value="Genomic_DNA"/>
</dbReference>
<dbReference type="EMBL" id="CR759915">
    <property type="status" value="NOT_ANNOTATED_CDS"/>
    <property type="molecule type" value="Genomic_DNA"/>
</dbReference>
<dbReference type="EMBL" id="CR925765">
    <property type="status" value="NOT_ANNOTATED_CDS"/>
    <property type="molecule type" value="Genomic_DNA"/>
</dbReference>
<dbReference type="EMBL" id="BC137541">
    <property type="protein sequence ID" value="AAI37542.1"/>
    <property type="molecule type" value="mRNA"/>
</dbReference>
<dbReference type="EMBL" id="BC137542">
    <property type="protein sequence ID" value="AAI37543.1"/>
    <property type="molecule type" value="mRNA"/>
</dbReference>
<dbReference type="CCDS" id="CCDS34411.1">
    <molecule id="Q5SSQ6-2"/>
</dbReference>
<dbReference type="RefSeq" id="NP_001034740.1">
    <molecule id="Q5SSQ6-2"/>
    <property type="nucleotide sequence ID" value="NM_001039651.2"/>
</dbReference>
<dbReference type="SMR" id="Q5SSQ6"/>
<dbReference type="BioGRID" id="134996">
    <property type="interactions" value="22"/>
</dbReference>
<dbReference type="FunCoup" id="Q5SSQ6">
    <property type="interactions" value="5"/>
</dbReference>
<dbReference type="IntAct" id="Q5SSQ6">
    <property type="interactions" value="14"/>
</dbReference>
<dbReference type="STRING" id="9606.ENSP00000411948"/>
<dbReference type="GlyGen" id="Q5SSQ6">
    <property type="glycosylation" value="1 site, 1 O-linked glycan (1 site)"/>
</dbReference>
<dbReference type="iPTMnet" id="Q5SSQ6"/>
<dbReference type="PhosphoSitePlus" id="Q5SSQ6"/>
<dbReference type="BioMuta" id="SAPCD1"/>
<dbReference type="DMDM" id="109829408"/>
<dbReference type="MassIVE" id="Q5SSQ6"/>
<dbReference type="ProteomicsDB" id="63885">
    <molecule id="Q5SSQ6-1"/>
</dbReference>
<dbReference type="ProteomicsDB" id="63886">
    <molecule id="Q5SSQ6-2"/>
</dbReference>
<dbReference type="Antibodypedia" id="70925">
    <property type="antibodies" value="19 antibodies from 8 providers"/>
</dbReference>
<dbReference type="DNASU" id="401251"/>
<dbReference type="Ensembl" id="ENST00000415669.4">
    <molecule id="Q5SSQ6-2"/>
    <property type="protein sequence ID" value="ENSP00000411948.2"/>
    <property type="gene ID" value="ENSG00000228727.10"/>
</dbReference>
<dbReference type="Ensembl" id="ENST00000425424.4">
    <molecule id="Q5SSQ6-1"/>
    <property type="protein sequence ID" value="ENSP00000413372.1"/>
    <property type="gene ID" value="ENSG00000228727.10"/>
</dbReference>
<dbReference type="Ensembl" id="ENST00000443153.5">
    <molecule id="Q5SSQ6-2"/>
    <property type="protein sequence ID" value="ENSP00000403687.2"/>
    <property type="gene ID" value="ENSG00000227074.11"/>
</dbReference>
<dbReference type="Ensembl" id="ENST00000447852.3">
    <molecule id="Q5SSQ6-2"/>
    <property type="protein sequence ID" value="ENSP00000403346.2"/>
    <property type="gene ID" value="ENSG00000227861.9"/>
</dbReference>
<dbReference type="Ensembl" id="ENST00000449857.3">
    <molecule id="Q5SSQ6-2"/>
    <property type="protein sequence ID" value="ENSP00000387942.2"/>
    <property type="gene ID" value="ENSG00000237918.9"/>
</dbReference>
<dbReference type="Ensembl" id="ENST00000453534.5">
    <molecule id="Q5SSQ6-2"/>
    <property type="protein sequence ID" value="ENSP00000404105.2"/>
    <property type="gene ID" value="ENSG00000234951.9"/>
</dbReference>
<dbReference type="Ensembl" id="ENST00000457185.4">
    <molecule id="Q5SSQ6-2"/>
    <property type="protein sequence ID" value="ENSP00000405513.2"/>
    <property type="gene ID" value="ENSG00000229176.11"/>
</dbReference>
<dbReference type="Ensembl" id="ENST00000547662.3">
    <molecule id="Q5SSQ6-1"/>
    <property type="protein sequence ID" value="ENSP00000447344.1"/>
    <property type="gene ID" value="ENSG00000229176.11"/>
</dbReference>
<dbReference type="Ensembl" id="ENST00000548987.3">
    <molecule id="Q5SSQ6-1"/>
    <property type="protein sequence ID" value="ENSP00000448208.1"/>
    <property type="gene ID" value="ENSG00000227074.11"/>
</dbReference>
<dbReference type="Ensembl" id="ENST00000551778.3">
    <molecule id="Q5SSQ6-1"/>
    <property type="protein sequence ID" value="ENSP00000450257.1"/>
    <property type="gene ID" value="ENSG00000234951.9"/>
</dbReference>
<dbReference type="GeneID" id="401251"/>
<dbReference type="KEGG" id="hsa:401251"/>
<dbReference type="MANE-Select" id="ENST00000415669.4">
    <molecule id="Q5SSQ6-2"/>
    <property type="protein sequence ID" value="ENSP00000411948.2"/>
    <property type="RefSeq nucleotide sequence ID" value="NM_001039651.2"/>
    <property type="RefSeq protein sequence ID" value="NP_001034740.1"/>
</dbReference>
<dbReference type="UCSC" id="uc063nhd.1">
    <molecule id="Q5SSQ6-1"/>
    <property type="organism name" value="human"/>
</dbReference>
<dbReference type="AGR" id="HGNC:13938"/>
<dbReference type="CTD" id="401251"/>
<dbReference type="DisGeNET" id="401251"/>
<dbReference type="GeneCards" id="SAPCD1"/>
<dbReference type="HGNC" id="HGNC:13938">
    <property type="gene designation" value="SAPCD1"/>
</dbReference>
<dbReference type="HPA" id="ENSG00000228727">
    <property type="expression patterns" value="Tissue enhanced (skin)"/>
</dbReference>
<dbReference type="neXtProt" id="NX_Q5SSQ6"/>
<dbReference type="OpenTargets" id="ENSG00000228727"/>
<dbReference type="PharmGKB" id="PA134974558"/>
<dbReference type="VEuPathDB" id="HostDB:ENSG00000228727"/>
<dbReference type="GeneTree" id="ENSGT00500000045192"/>
<dbReference type="InParanoid" id="Q5SSQ6"/>
<dbReference type="OMA" id="RQDALWQ"/>
<dbReference type="OrthoDB" id="10035013at2759"/>
<dbReference type="PAN-GO" id="Q5SSQ6">
    <property type="GO annotations" value="0 GO annotations based on evolutionary models"/>
</dbReference>
<dbReference type="PhylomeDB" id="Q5SSQ6"/>
<dbReference type="TreeFam" id="TF324086"/>
<dbReference type="PathwayCommons" id="Q5SSQ6"/>
<dbReference type="SignaLink" id="Q5SSQ6"/>
<dbReference type="BioGRID-ORCS" id="401251">
    <property type="hits" value="14 hits in 1146 CRISPR screens"/>
</dbReference>
<dbReference type="GenomeRNAi" id="401251"/>
<dbReference type="Pharos" id="Q5SSQ6">
    <property type="development level" value="Tdark"/>
</dbReference>
<dbReference type="PRO" id="PR:Q5SSQ6"/>
<dbReference type="Proteomes" id="UP000005640">
    <property type="component" value="Chromosome 6"/>
</dbReference>
<dbReference type="RNAct" id="Q5SSQ6">
    <property type="molecule type" value="protein"/>
</dbReference>
<dbReference type="Bgee" id="ENSG00000228727">
    <property type="expression patterns" value="Expressed in skin of leg and 93 other cell types or tissues"/>
</dbReference>
<dbReference type="ExpressionAtlas" id="Q5SSQ6">
    <property type="expression patterns" value="baseline and differential"/>
</dbReference>
<dbReference type="InterPro" id="IPR026828">
    <property type="entry name" value="Suppressor_APCD_1/2"/>
</dbReference>
<dbReference type="PANTHER" id="PTHR14907">
    <property type="entry name" value="FI14130P"/>
    <property type="match status" value="1"/>
</dbReference>
<dbReference type="PANTHER" id="PTHR14907:SF4">
    <property type="entry name" value="SUPPRESSOR APC DOMAIN-CONTAINING PROTEIN 1"/>
    <property type="match status" value="1"/>
</dbReference>
<dbReference type="Pfam" id="PF11414">
    <property type="entry name" value="Suppressor_APC"/>
    <property type="match status" value="1"/>
</dbReference>
<protein>
    <recommendedName>
        <fullName>Suppressor APC domain-containing protein 1</fullName>
    </recommendedName>
    <alternativeName>
        <fullName>Protein G7d</fullName>
    </alternativeName>
</protein>